<organism>
    <name type="scientific">Geotalea uraniireducens (strain Rf4)</name>
    <name type="common">Geobacter uraniireducens</name>
    <dbReference type="NCBI Taxonomy" id="351605"/>
    <lineage>
        <taxon>Bacteria</taxon>
        <taxon>Pseudomonadati</taxon>
        <taxon>Thermodesulfobacteriota</taxon>
        <taxon>Desulfuromonadia</taxon>
        <taxon>Geobacterales</taxon>
        <taxon>Geobacteraceae</taxon>
        <taxon>Geotalea</taxon>
    </lineage>
</organism>
<evidence type="ECO:0000255" key="1">
    <source>
        <dbReference type="HAMAP-Rule" id="MF_00712"/>
    </source>
</evidence>
<dbReference type="EC" id="1.4.4.2" evidence="1"/>
<dbReference type="EMBL" id="CP000698">
    <property type="protein sequence ID" value="ABQ24553.1"/>
    <property type="molecule type" value="Genomic_DNA"/>
</dbReference>
<dbReference type="RefSeq" id="WP_011937279.1">
    <property type="nucleotide sequence ID" value="NC_009483.1"/>
</dbReference>
<dbReference type="SMR" id="A5GCZ8"/>
<dbReference type="STRING" id="351605.Gura_0337"/>
<dbReference type="KEGG" id="gur:Gura_0337"/>
<dbReference type="HOGENOM" id="CLU_004620_0_2_7"/>
<dbReference type="OrthoDB" id="9801272at2"/>
<dbReference type="Proteomes" id="UP000006695">
    <property type="component" value="Chromosome"/>
</dbReference>
<dbReference type="GO" id="GO:0004375">
    <property type="term" value="F:glycine dehydrogenase (decarboxylating) activity"/>
    <property type="evidence" value="ECO:0007669"/>
    <property type="project" value="UniProtKB-EC"/>
</dbReference>
<dbReference type="GO" id="GO:0019464">
    <property type="term" value="P:glycine decarboxylation via glycine cleavage system"/>
    <property type="evidence" value="ECO:0007669"/>
    <property type="project" value="UniProtKB-UniRule"/>
</dbReference>
<dbReference type="GO" id="GO:0009116">
    <property type="term" value="P:nucleoside metabolic process"/>
    <property type="evidence" value="ECO:0007669"/>
    <property type="project" value="InterPro"/>
</dbReference>
<dbReference type="CDD" id="cd00613">
    <property type="entry name" value="GDC-P"/>
    <property type="match status" value="1"/>
</dbReference>
<dbReference type="Gene3D" id="3.90.1150.10">
    <property type="entry name" value="Aspartate Aminotransferase, domain 1"/>
    <property type="match status" value="1"/>
</dbReference>
<dbReference type="Gene3D" id="3.40.640.10">
    <property type="entry name" value="Type I PLP-dependent aspartate aminotransferase-like (Major domain)"/>
    <property type="match status" value="1"/>
</dbReference>
<dbReference type="HAMAP" id="MF_00712">
    <property type="entry name" value="GcvPA"/>
    <property type="match status" value="1"/>
</dbReference>
<dbReference type="InterPro" id="IPR023010">
    <property type="entry name" value="GcvPA"/>
</dbReference>
<dbReference type="InterPro" id="IPR049315">
    <property type="entry name" value="GDC-P_N"/>
</dbReference>
<dbReference type="InterPro" id="IPR020581">
    <property type="entry name" value="GDC_P"/>
</dbReference>
<dbReference type="InterPro" id="IPR015424">
    <property type="entry name" value="PyrdxlP-dep_Trfase"/>
</dbReference>
<dbReference type="InterPro" id="IPR015421">
    <property type="entry name" value="PyrdxlP-dep_Trfase_major"/>
</dbReference>
<dbReference type="InterPro" id="IPR015422">
    <property type="entry name" value="PyrdxlP-dep_Trfase_small"/>
</dbReference>
<dbReference type="NCBIfam" id="NF001696">
    <property type="entry name" value="PRK00451.1"/>
    <property type="match status" value="1"/>
</dbReference>
<dbReference type="PANTHER" id="PTHR42806">
    <property type="entry name" value="GLYCINE CLEAVAGE SYSTEM P-PROTEIN"/>
    <property type="match status" value="1"/>
</dbReference>
<dbReference type="PANTHER" id="PTHR42806:SF1">
    <property type="entry name" value="GLYCINE DEHYDROGENASE (DECARBOXYLATING)"/>
    <property type="match status" value="1"/>
</dbReference>
<dbReference type="Pfam" id="PF02347">
    <property type="entry name" value="GDC-P"/>
    <property type="match status" value="1"/>
</dbReference>
<dbReference type="PIRSF" id="PIRSF006815">
    <property type="entry name" value="GcvPA"/>
    <property type="match status" value="1"/>
</dbReference>
<dbReference type="SUPFAM" id="SSF53383">
    <property type="entry name" value="PLP-dependent transferases"/>
    <property type="match status" value="1"/>
</dbReference>
<reference key="1">
    <citation type="submission" date="2007-05" db="EMBL/GenBank/DDBJ databases">
        <title>Complete sequence of Geobacter uraniireducens Rf4.</title>
        <authorList>
            <consortium name="US DOE Joint Genome Institute"/>
            <person name="Copeland A."/>
            <person name="Lucas S."/>
            <person name="Lapidus A."/>
            <person name="Barry K."/>
            <person name="Detter J.C."/>
            <person name="Glavina del Rio T."/>
            <person name="Hammon N."/>
            <person name="Israni S."/>
            <person name="Dalin E."/>
            <person name="Tice H."/>
            <person name="Pitluck S."/>
            <person name="Chertkov O."/>
            <person name="Brettin T."/>
            <person name="Bruce D."/>
            <person name="Han C."/>
            <person name="Schmutz J."/>
            <person name="Larimer F."/>
            <person name="Land M."/>
            <person name="Hauser L."/>
            <person name="Kyrpides N."/>
            <person name="Mikhailova N."/>
            <person name="Shelobolina E."/>
            <person name="Aklujkar M."/>
            <person name="Lovley D."/>
            <person name="Richardson P."/>
        </authorList>
    </citation>
    <scope>NUCLEOTIDE SEQUENCE [LARGE SCALE GENOMIC DNA]</scope>
    <source>
        <strain>ATCC BAA-1134 / JCM 13001 / Rf4</strain>
    </source>
</reference>
<protein>
    <recommendedName>
        <fullName evidence="1">Probable glycine dehydrogenase (decarboxylating) subunit 1</fullName>
        <ecNumber evidence="1">1.4.4.2</ecNumber>
    </recommendedName>
    <alternativeName>
        <fullName evidence="1">Glycine cleavage system P-protein subunit 1</fullName>
    </alternativeName>
    <alternativeName>
        <fullName evidence="1">Glycine decarboxylase subunit 1</fullName>
    </alternativeName>
    <alternativeName>
        <fullName evidence="1">Glycine dehydrogenase (aminomethyl-transferring) subunit 1</fullName>
    </alternativeName>
</protein>
<sequence>MSYCPNTPEDIREMLAAIGVASVDALFAPIPAGLRARSFALPDGTSEQELLRQMKQLAGTDRPVTGFIGGGYYDHYIPAVVDHLSGRAEFYTAYTPYQPECSQGTLQALFEYQTAICRLTGMEVSNASLYDGGTALAEAAMMALRVTGRNRLVIDGSVNPFSREIVRTYLTNLGVEIVEIPARDGLADRPALTAALTDLTAAVILQNPNFFGSVEDLSDIALTAHANGALLIASVYPISLGLVKSPGAMGADIVVGDGQSLGNPLSFGGPSFGFIATTKKYIRNLPGRIIGETVDKSGRRGFVLTLQAREQHIKRHKATSNICSNQSLCALRGMIFLASVGKEGLVDLARLNRDKAEYAKGLLGSIKGVKLLNTAPTFNEFTIVLPKDAAEVAERLLGKGVAAGVPLGAYYHGMDNCLVVTVTEKRTRDEIDALAKELEGAL</sequence>
<proteinExistence type="inferred from homology"/>
<accession>A5GCZ8</accession>
<feature type="chain" id="PRO_1000083222" description="Probable glycine dehydrogenase (decarboxylating) subunit 1">
    <location>
        <begin position="1"/>
        <end position="442"/>
    </location>
</feature>
<comment type="function">
    <text evidence="1">The glycine cleavage system catalyzes the degradation of glycine. The P protein binds the alpha-amino group of glycine through its pyridoxal phosphate cofactor; CO(2) is released and the remaining methylamine moiety is then transferred to the lipoamide cofactor of the H protein.</text>
</comment>
<comment type="catalytic activity">
    <reaction evidence="1">
        <text>N(6)-[(R)-lipoyl]-L-lysyl-[glycine-cleavage complex H protein] + glycine + H(+) = N(6)-[(R)-S(8)-aminomethyldihydrolipoyl]-L-lysyl-[glycine-cleavage complex H protein] + CO2</text>
        <dbReference type="Rhea" id="RHEA:24304"/>
        <dbReference type="Rhea" id="RHEA-COMP:10494"/>
        <dbReference type="Rhea" id="RHEA-COMP:10495"/>
        <dbReference type="ChEBI" id="CHEBI:15378"/>
        <dbReference type="ChEBI" id="CHEBI:16526"/>
        <dbReference type="ChEBI" id="CHEBI:57305"/>
        <dbReference type="ChEBI" id="CHEBI:83099"/>
        <dbReference type="ChEBI" id="CHEBI:83143"/>
        <dbReference type="EC" id="1.4.4.2"/>
    </reaction>
</comment>
<comment type="subunit">
    <text evidence="1">The glycine cleavage system is composed of four proteins: P, T, L and H. In this organism, the P 'protein' is a heterodimer of two subunits.</text>
</comment>
<comment type="similarity">
    <text evidence="1">Belongs to the GcvP family. N-terminal subunit subfamily.</text>
</comment>
<name>GCSPA_GEOUR</name>
<keyword id="KW-0560">Oxidoreductase</keyword>
<keyword id="KW-1185">Reference proteome</keyword>
<gene>
    <name evidence="1" type="primary">gcvPA</name>
    <name type="ordered locus">Gura_0337</name>
</gene>